<name>PGK_NATPD</name>
<organism>
    <name type="scientific">Natronomonas pharaonis (strain ATCC 35678 / DSM 2160 / CIP 103997 / JCM 8858 / NBRC 14720 / NCIMB 2260 / Gabara)</name>
    <name type="common">Halobacterium pharaonis</name>
    <dbReference type="NCBI Taxonomy" id="348780"/>
    <lineage>
        <taxon>Archaea</taxon>
        <taxon>Methanobacteriati</taxon>
        <taxon>Methanobacteriota</taxon>
        <taxon>Stenosarchaea group</taxon>
        <taxon>Halobacteria</taxon>
        <taxon>Halobacteriales</taxon>
        <taxon>Haloarculaceae</taxon>
        <taxon>Natronomonas</taxon>
    </lineage>
</organism>
<feature type="chain" id="PRO_1000192862" description="Phosphoglycerate kinase">
    <location>
        <begin position="1"/>
        <end position="396"/>
    </location>
</feature>
<feature type="binding site" evidence="1">
    <location>
        <begin position="20"/>
        <end position="22"/>
    </location>
    <ligand>
        <name>substrate</name>
    </ligand>
</feature>
<feature type="binding site" evidence="1">
    <location>
        <position position="35"/>
    </location>
    <ligand>
        <name>substrate</name>
    </ligand>
</feature>
<feature type="binding site" evidence="1">
    <location>
        <begin position="58"/>
        <end position="61"/>
    </location>
    <ligand>
        <name>substrate</name>
    </ligand>
</feature>
<feature type="binding site" evidence="1">
    <location>
        <position position="115"/>
    </location>
    <ligand>
        <name>substrate</name>
    </ligand>
</feature>
<feature type="binding site" evidence="1">
    <location>
        <position position="155"/>
    </location>
    <ligand>
        <name>substrate</name>
    </ligand>
</feature>
<feature type="binding site" evidence="1">
    <location>
        <position position="328"/>
    </location>
    <ligand>
        <name>ATP</name>
        <dbReference type="ChEBI" id="CHEBI:30616"/>
    </ligand>
</feature>
<feature type="binding site" evidence="1">
    <location>
        <begin position="353"/>
        <end position="356"/>
    </location>
    <ligand>
        <name>ATP</name>
        <dbReference type="ChEBI" id="CHEBI:30616"/>
    </ligand>
</feature>
<reference key="1">
    <citation type="journal article" date="2005" name="Genome Res.">
        <title>Living with two extremes: conclusions from the genome sequence of Natronomonas pharaonis.</title>
        <authorList>
            <person name="Falb M."/>
            <person name="Pfeiffer F."/>
            <person name="Palm P."/>
            <person name="Rodewald K."/>
            <person name="Hickmann V."/>
            <person name="Tittor J."/>
            <person name="Oesterhelt D."/>
        </authorList>
    </citation>
    <scope>NUCLEOTIDE SEQUENCE [LARGE SCALE GENOMIC DNA]</scope>
    <source>
        <strain>ATCC 35678 / DSM 2160 / CIP 103997 / JCM 8858 / NBRC 14720 / NCIMB 2260 / Gabara</strain>
    </source>
</reference>
<accession>Q3INZ6</accession>
<gene>
    <name evidence="1" type="primary">pgk</name>
    <name type="ordered locus">NP_4130A</name>
</gene>
<protein>
    <recommendedName>
        <fullName evidence="1">Phosphoglycerate kinase</fullName>
        <ecNumber evidence="1">2.7.2.3</ecNumber>
    </recommendedName>
</protein>
<comment type="catalytic activity">
    <reaction evidence="1">
        <text>(2R)-3-phosphoglycerate + ATP = (2R)-3-phospho-glyceroyl phosphate + ADP</text>
        <dbReference type="Rhea" id="RHEA:14801"/>
        <dbReference type="ChEBI" id="CHEBI:30616"/>
        <dbReference type="ChEBI" id="CHEBI:57604"/>
        <dbReference type="ChEBI" id="CHEBI:58272"/>
        <dbReference type="ChEBI" id="CHEBI:456216"/>
        <dbReference type="EC" id="2.7.2.3"/>
    </reaction>
</comment>
<comment type="pathway">
    <text evidence="1">Carbohydrate degradation; glycolysis; pyruvate from D-glyceraldehyde 3-phosphate: step 2/5.</text>
</comment>
<comment type="subunit">
    <text evidence="1">Monomer.</text>
</comment>
<comment type="subcellular location">
    <subcellularLocation>
        <location evidence="1">Cytoplasm</location>
    </subcellularLocation>
</comment>
<comment type="similarity">
    <text evidence="1">Belongs to the phosphoglycerate kinase family.</text>
</comment>
<dbReference type="EC" id="2.7.2.3" evidence="1"/>
<dbReference type="EMBL" id="CR936257">
    <property type="protein sequence ID" value="CAI50156.1"/>
    <property type="molecule type" value="Genomic_DNA"/>
</dbReference>
<dbReference type="RefSeq" id="WP_011323772.1">
    <property type="nucleotide sequence ID" value="NC_007426.1"/>
</dbReference>
<dbReference type="SMR" id="Q3INZ6"/>
<dbReference type="STRING" id="348780.NP_4130A"/>
<dbReference type="EnsemblBacteria" id="CAI50156">
    <property type="protein sequence ID" value="CAI50156"/>
    <property type="gene ID" value="NP_4130A"/>
</dbReference>
<dbReference type="GeneID" id="3703020"/>
<dbReference type="KEGG" id="nph:NP_4130A"/>
<dbReference type="eggNOG" id="arCOG00496">
    <property type="taxonomic scope" value="Archaea"/>
</dbReference>
<dbReference type="HOGENOM" id="CLU_025427_0_2_2"/>
<dbReference type="OrthoDB" id="6575at2157"/>
<dbReference type="UniPathway" id="UPA00109">
    <property type="reaction ID" value="UER00185"/>
</dbReference>
<dbReference type="Proteomes" id="UP000002698">
    <property type="component" value="Chromosome"/>
</dbReference>
<dbReference type="GO" id="GO:0005829">
    <property type="term" value="C:cytosol"/>
    <property type="evidence" value="ECO:0007669"/>
    <property type="project" value="TreeGrafter"/>
</dbReference>
<dbReference type="GO" id="GO:0043531">
    <property type="term" value="F:ADP binding"/>
    <property type="evidence" value="ECO:0007669"/>
    <property type="project" value="TreeGrafter"/>
</dbReference>
<dbReference type="GO" id="GO:0005524">
    <property type="term" value="F:ATP binding"/>
    <property type="evidence" value="ECO:0007669"/>
    <property type="project" value="UniProtKB-KW"/>
</dbReference>
<dbReference type="GO" id="GO:0004618">
    <property type="term" value="F:phosphoglycerate kinase activity"/>
    <property type="evidence" value="ECO:0007669"/>
    <property type="project" value="UniProtKB-UniRule"/>
</dbReference>
<dbReference type="GO" id="GO:0006094">
    <property type="term" value="P:gluconeogenesis"/>
    <property type="evidence" value="ECO:0007669"/>
    <property type="project" value="TreeGrafter"/>
</dbReference>
<dbReference type="GO" id="GO:0006096">
    <property type="term" value="P:glycolytic process"/>
    <property type="evidence" value="ECO:0007669"/>
    <property type="project" value="UniProtKB-UniRule"/>
</dbReference>
<dbReference type="FunFam" id="3.40.50.1260:FF:000006">
    <property type="entry name" value="Phosphoglycerate kinase"/>
    <property type="match status" value="1"/>
</dbReference>
<dbReference type="FunFam" id="3.40.50.1260:FF:000012">
    <property type="entry name" value="Phosphoglycerate kinase"/>
    <property type="match status" value="1"/>
</dbReference>
<dbReference type="Gene3D" id="3.40.50.1260">
    <property type="entry name" value="Phosphoglycerate kinase, N-terminal domain"/>
    <property type="match status" value="2"/>
</dbReference>
<dbReference type="HAMAP" id="MF_00145">
    <property type="entry name" value="Phosphoglyc_kinase"/>
    <property type="match status" value="1"/>
</dbReference>
<dbReference type="InterPro" id="IPR001576">
    <property type="entry name" value="Phosphoglycerate_kinase"/>
</dbReference>
<dbReference type="InterPro" id="IPR015824">
    <property type="entry name" value="Phosphoglycerate_kinase_N"/>
</dbReference>
<dbReference type="InterPro" id="IPR036043">
    <property type="entry name" value="Phosphoglycerate_kinase_sf"/>
</dbReference>
<dbReference type="PANTHER" id="PTHR11406">
    <property type="entry name" value="PHOSPHOGLYCERATE KINASE"/>
    <property type="match status" value="1"/>
</dbReference>
<dbReference type="PANTHER" id="PTHR11406:SF23">
    <property type="entry name" value="PHOSPHOGLYCERATE KINASE 1, CHLOROPLASTIC-RELATED"/>
    <property type="match status" value="1"/>
</dbReference>
<dbReference type="Pfam" id="PF00162">
    <property type="entry name" value="PGK"/>
    <property type="match status" value="1"/>
</dbReference>
<dbReference type="PIRSF" id="PIRSF000724">
    <property type="entry name" value="Pgk"/>
    <property type="match status" value="1"/>
</dbReference>
<dbReference type="PRINTS" id="PR00477">
    <property type="entry name" value="PHGLYCKINASE"/>
</dbReference>
<dbReference type="SUPFAM" id="SSF53748">
    <property type="entry name" value="Phosphoglycerate kinase"/>
    <property type="match status" value="1"/>
</dbReference>
<evidence type="ECO:0000255" key="1">
    <source>
        <dbReference type="HAMAP-Rule" id="MF_00145"/>
    </source>
</evidence>
<keyword id="KW-0067">ATP-binding</keyword>
<keyword id="KW-0963">Cytoplasm</keyword>
<keyword id="KW-0324">Glycolysis</keyword>
<keyword id="KW-0418">Kinase</keyword>
<keyword id="KW-0547">Nucleotide-binding</keyword>
<keyword id="KW-1185">Reference proteome</keyword>
<keyword id="KW-0808">Transferase</keyword>
<proteinExistence type="inferred from homology"/>
<sequence length="396" mass="42316">MIRTLDDLEADGTALGVRIDINSPLSSDGLADDARLRAHVDTVEELCRRDARVALLAHQGRPGGDEFSDLERHAERLDELLDAPVEYCDSTFSAEARTRIDELDPGRAVLLENTRFYSEEYMSFEPSAAAETYLVSRLAPALDAYVNDAFATAHRSQPSVVGFPERLPAYAGRVMERELDVLGNIESSPEPRVYVLGGAKVDDSIAVARSVLERGLADSVLTAGIVGNAFLLADGVSLGAASAAVVNERSHEAVKQAGDLLDDFSHRIYMPRDVAVENDAGERVEHDLEDLPASTPAMDIGARTVAAYANILDDAGTAILNGPAGVFEDDRFETGTLELYKSATRAEQSIVGGGDTASALRKLGILEDFDHVSTGGGAALNMLTGETLVGVEALRE</sequence>